<evidence type="ECO:0000256" key="1">
    <source>
        <dbReference type="SAM" id="MobiDB-lite"/>
    </source>
</evidence>
<evidence type="ECO:0000305" key="2"/>
<organism>
    <name type="scientific">Prosthecochloris vibrioformis</name>
    <name type="common">Chlorobium vibrioforme</name>
    <dbReference type="NCBI Taxonomy" id="1098"/>
    <lineage>
        <taxon>Bacteria</taxon>
        <taxon>Pseudomonadati</taxon>
        <taxon>Chlorobiota</taxon>
        <taxon>Chlorobiia</taxon>
        <taxon>Chlorobiales</taxon>
        <taxon>Chlorobiaceae</taxon>
        <taxon>Prosthecochloris</taxon>
    </lineage>
</organism>
<proteinExistence type="inferred from homology"/>
<accession>P94689</accession>
<keyword id="KW-0687">Ribonucleoprotein</keyword>
<keyword id="KW-0689">Ribosomal protein</keyword>
<reference key="1">
    <citation type="journal article" date="1996" name="J. Bacteriol.">
        <title>Malate dehydrogenase from the mesophile Chlorobium vibrioforme and from the mild thermophile Chlorobium tepidum: molecular cloning, construction of a hybrid, and expression in Escherichia coli.</title>
        <authorList>
            <person name="Naterstad K."/>
            <person name="Lauvrak V."/>
            <person name="Sirevag R."/>
        </authorList>
    </citation>
    <scope>NUCLEOTIDE SEQUENCE [GENOMIC DNA]</scope>
</reference>
<feature type="chain" id="PRO_0000181073" description="Large ribosomal subunit protein bL27">
    <location>
        <begin position="1"/>
        <end position="84" status="greater than"/>
    </location>
</feature>
<feature type="region of interest" description="Disordered" evidence="1">
    <location>
        <begin position="1"/>
        <end position="20"/>
    </location>
</feature>
<feature type="non-terminal residue">
    <location>
        <position position="84"/>
    </location>
</feature>
<comment type="similarity">
    <text evidence="2">Belongs to the bacterial ribosomal protein bL27 family.</text>
</comment>
<sequence>MAHKKGGGSTKNGRDSNPKYLGVKAAGVSTVNAGTIILRQRGTAIKPGDNAGLGKDHTIFALVDGTVHFRNGRNNKKQVDIIPS</sequence>
<protein>
    <recommendedName>
        <fullName evidence="2">Large ribosomal subunit protein bL27</fullName>
    </recommendedName>
    <alternativeName>
        <fullName>50S ribosomal protein L27</fullName>
    </alternativeName>
</protein>
<name>RL27_PROVB</name>
<dbReference type="EMBL" id="X79219">
    <property type="protein sequence ID" value="CAA55805.1"/>
    <property type="molecule type" value="Genomic_DNA"/>
</dbReference>
<dbReference type="SMR" id="P94689"/>
<dbReference type="GO" id="GO:1990904">
    <property type="term" value="C:ribonucleoprotein complex"/>
    <property type="evidence" value="ECO:0007669"/>
    <property type="project" value="UniProtKB-KW"/>
</dbReference>
<dbReference type="GO" id="GO:0005840">
    <property type="term" value="C:ribosome"/>
    <property type="evidence" value="ECO:0007669"/>
    <property type="project" value="UniProtKB-KW"/>
</dbReference>
<dbReference type="GO" id="GO:0003735">
    <property type="term" value="F:structural constituent of ribosome"/>
    <property type="evidence" value="ECO:0007669"/>
    <property type="project" value="InterPro"/>
</dbReference>
<dbReference type="GO" id="GO:0006412">
    <property type="term" value="P:translation"/>
    <property type="evidence" value="ECO:0007669"/>
    <property type="project" value="InterPro"/>
</dbReference>
<dbReference type="FunFam" id="2.40.50.100:FF:000060">
    <property type="entry name" value="Apicoplast ribosomal protein L27"/>
    <property type="match status" value="1"/>
</dbReference>
<dbReference type="Gene3D" id="2.40.50.100">
    <property type="match status" value="1"/>
</dbReference>
<dbReference type="HAMAP" id="MF_00539">
    <property type="entry name" value="Ribosomal_bL27"/>
    <property type="match status" value="1"/>
</dbReference>
<dbReference type="InterPro" id="IPR001684">
    <property type="entry name" value="Ribosomal_bL27"/>
</dbReference>
<dbReference type="InterPro" id="IPR018261">
    <property type="entry name" value="Ribosomal_bL27_CS"/>
</dbReference>
<dbReference type="NCBIfam" id="TIGR00062">
    <property type="entry name" value="L27"/>
    <property type="match status" value="1"/>
</dbReference>
<dbReference type="PANTHER" id="PTHR15893:SF0">
    <property type="entry name" value="LARGE RIBOSOMAL SUBUNIT PROTEIN BL27M"/>
    <property type="match status" value="1"/>
</dbReference>
<dbReference type="PANTHER" id="PTHR15893">
    <property type="entry name" value="RIBOSOMAL PROTEIN L27"/>
    <property type="match status" value="1"/>
</dbReference>
<dbReference type="Pfam" id="PF01016">
    <property type="entry name" value="Ribosomal_L27"/>
    <property type="match status" value="1"/>
</dbReference>
<dbReference type="PRINTS" id="PR00063">
    <property type="entry name" value="RIBOSOMALL27"/>
</dbReference>
<dbReference type="SUPFAM" id="SSF110324">
    <property type="entry name" value="Ribosomal L27 protein-like"/>
    <property type="match status" value="1"/>
</dbReference>
<dbReference type="PROSITE" id="PS00831">
    <property type="entry name" value="RIBOSOMAL_L27"/>
    <property type="match status" value="1"/>
</dbReference>
<gene>
    <name type="primary">rpmA</name>
    <name type="synonym">rpl27</name>
</gene>